<protein>
    <recommendedName>
        <fullName evidence="1">HTH-type transcriptional regulator MntR</fullName>
    </recommendedName>
    <alternativeName>
        <fullName evidence="1">Manganese transport regulator</fullName>
    </alternativeName>
</protein>
<keyword id="KW-0010">Activator</keyword>
<keyword id="KW-0963">Cytoplasm</keyword>
<keyword id="KW-0238">DNA-binding</keyword>
<keyword id="KW-0464">Manganese</keyword>
<keyword id="KW-0479">Metal-binding</keyword>
<keyword id="KW-0678">Repressor</keyword>
<keyword id="KW-0804">Transcription</keyword>
<keyword id="KW-0805">Transcription regulation</keyword>
<organism>
    <name type="scientific">Bacillus cereus (strain 03BB102)</name>
    <dbReference type="NCBI Taxonomy" id="572264"/>
    <lineage>
        <taxon>Bacteria</taxon>
        <taxon>Bacillati</taxon>
        <taxon>Bacillota</taxon>
        <taxon>Bacilli</taxon>
        <taxon>Bacillales</taxon>
        <taxon>Bacillaceae</taxon>
        <taxon>Bacillus</taxon>
        <taxon>Bacillus cereus group</taxon>
    </lineage>
</organism>
<comment type="function">
    <text evidence="1">Central regulator of manganese homeostasis.</text>
</comment>
<comment type="activity regulation">
    <text evidence="1">DNA binding is strongly activated by Mn(2+).</text>
</comment>
<comment type="subunit">
    <text evidence="1">Homodimer.</text>
</comment>
<comment type="subcellular location">
    <subcellularLocation>
        <location evidence="1">Cytoplasm</location>
    </subcellularLocation>
</comment>
<comment type="similarity">
    <text evidence="1">Belongs to the DtxR/MntR family.</text>
</comment>
<sequence>MPTPSMEDYIEQIYLLIDEKGYARVSDIAEALSVHPSSVTKMVQKLDKDEYLIYEKYRGLVLTSKGKKIGERLVYRHELLEQFMRIIGVDESKIYNDVEGIEHHLSWEAIDRIGDLVQYFEQDEVRVETLRGVQKANEEKSN</sequence>
<proteinExistence type="inferred from homology"/>
<name>MNTR_BACC3</name>
<feature type="chain" id="PRO_1000190479" description="HTH-type transcriptional regulator MntR">
    <location>
        <begin position="1"/>
        <end position="142"/>
    </location>
</feature>
<feature type="domain" description="HTH dtxR-type" evidence="1">
    <location>
        <begin position="1"/>
        <end position="63"/>
    </location>
</feature>
<feature type="binding site" evidence="1">
    <location>
        <position position="8"/>
    </location>
    <ligand>
        <name>Mn(2+)</name>
        <dbReference type="ChEBI" id="CHEBI:29035"/>
        <label>1</label>
    </ligand>
</feature>
<feature type="binding site" evidence="1">
    <location>
        <position position="11"/>
    </location>
    <ligand>
        <name>Mn(2+)</name>
        <dbReference type="ChEBI" id="CHEBI:29035"/>
        <label>2</label>
    </ligand>
</feature>
<feature type="binding site" evidence="1">
    <location>
        <position position="77"/>
    </location>
    <ligand>
        <name>Mn(2+)</name>
        <dbReference type="ChEBI" id="CHEBI:29035"/>
        <label>2</label>
    </ligand>
</feature>
<feature type="binding site" evidence="1">
    <location>
        <position position="99"/>
    </location>
    <ligand>
        <name>Mn(2+)</name>
        <dbReference type="ChEBI" id="CHEBI:29035"/>
        <label>1</label>
    </ligand>
</feature>
<feature type="binding site" evidence="1">
    <location>
        <position position="99"/>
    </location>
    <ligand>
        <name>Mn(2+)</name>
        <dbReference type="ChEBI" id="CHEBI:29035"/>
        <label>2</label>
    </ligand>
</feature>
<feature type="binding site" evidence="1">
    <location>
        <position position="102"/>
    </location>
    <ligand>
        <name>Mn(2+)</name>
        <dbReference type="ChEBI" id="CHEBI:29035"/>
        <label>1</label>
    </ligand>
</feature>
<feature type="binding site" evidence="1">
    <location>
        <position position="102"/>
    </location>
    <ligand>
        <name>Mn(2+)</name>
        <dbReference type="ChEBI" id="CHEBI:29035"/>
        <label>2</label>
    </ligand>
</feature>
<feature type="binding site" evidence="1">
    <location>
        <position position="103"/>
    </location>
    <ligand>
        <name>Mn(2+)</name>
        <dbReference type="ChEBI" id="CHEBI:29035"/>
        <label>1</label>
    </ligand>
</feature>
<evidence type="ECO:0000255" key="1">
    <source>
        <dbReference type="HAMAP-Rule" id="MF_00732"/>
    </source>
</evidence>
<reference key="1">
    <citation type="submission" date="2009-02" db="EMBL/GenBank/DDBJ databases">
        <title>Genome sequence of Bacillus cereus 03BB102.</title>
        <authorList>
            <person name="Dodson R.J."/>
            <person name="Jackson P."/>
            <person name="Munk A.C."/>
            <person name="Brettin T."/>
            <person name="Bruce D."/>
            <person name="Detter C."/>
            <person name="Tapia R."/>
            <person name="Han C."/>
            <person name="Sutton G."/>
            <person name="Sims D."/>
        </authorList>
    </citation>
    <scope>NUCLEOTIDE SEQUENCE [LARGE SCALE GENOMIC DNA]</scope>
    <source>
        <strain>03BB102</strain>
    </source>
</reference>
<gene>
    <name evidence="1" type="primary">mntR</name>
    <name type="ordered locus">BCA_4312</name>
</gene>
<accession>C1ERS6</accession>
<dbReference type="EMBL" id="CP001407">
    <property type="protein sequence ID" value="ACO27437.1"/>
    <property type="molecule type" value="Genomic_DNA"/>
</dbReference>
<dbReference type="RefSeq" id="WP_001143076.1">
    <property type="nucleotide sequence ID" value="NZ_CP009318.1"/>
</dbReference>
<dbReference type="SMR" id="C1ERS6"/>
<dbReference type="GeneID" id="75087347"/>
<dbReference type="KEGG" id="bcx:BCA_4312"/>
<dbReference type="PATRIC" id="fig|572264.18.peg.4265"/>
<dbReference type="Proteomes" id="UP000002210">
    <property type="component" value="Chromosome"/>
</dbReference>
<dbReference type="GO" id="GO:0005737">
    <property type="term" value="C:cytoplasm"/>
    <property type="evidence" value="ECO:0007669"/>
    <property type="project" value="UniProtKB-SubCell"/>
</dbReference>
<dbReference type="GO" id="GO:0003677">
    <property type="term" value="F:DNA binding"/>
    <property type="evidence" value="ECO:0007669"/>
    <property type="project" value="UniProtKB-KW"/>
</dbReference>
<dbReference type="GO" id="GO:0003700">
    <property type="term" value="F:DNA-binding transcription factor activity"/>
    <property type="evidence" value="ECO:0007669"/>
    <property type="project" value="UniProtKB-UniRule"/>
</dbReference>
<dbReference type="GO" id="GO:0030145">
    <property type="term" value="F:manganese ion binding"/>
    <property type="evidence" value="ECO:0007669"/>
    <property type="project" value="UniProtKB-UniRule"/>
</dbReference>
<dbReference type="GO" id="GO:0046983">
    <property type="term" value="F:protein dimerization activity"/>
    <property type="evidence" value="ECO:0007669"/>
    <property type="project" value="InterPro"/>
</dbReference>
<dbReference type="GO" id="GO:0030026">
    <property type="term" value="P:intracellular manganese ion homeostasis"/>
    <property type="evidence" value="ECO:0007669"/>
    <property type="project" value="UniProtKB-UniRule"/>
</dbReference>
<dbReference type="FunFam" id="1.10.10.10:FF:000189">
    <property type="entry name" value="HTH-type transcriptional regulator MntR"/>
    <property type="match status" value="1"/>
</dbReference>
<dbReference type="FunFam" id="1.10.60.10:FF:000003">
    <property type="entry name" value="HTH-type transcriptional regulator MntR"/>
    <property type="match status" value="1"/>
</dbReference>
<dbReference type="Gene3D" id="1.10.60.10">
    <property type="entry name" value="Iron dependent repressor, metal binding and dimerisation domain"/>
    <property type="match status" value="1"/>
</dbReference>
<dbReference type="Gene3D" id="1.10.10.10">
    <property type="entry name" value="Winged helix-like DNA-binding domain superfamily/Winged helix DNA-binding domain"/>
    <property type="match status" value="1"/>
</dbReference>
<dbReference type="HAMAP" id="MF_00732">
    <property type="entry name" value="HTH_MntR"/>
    <property type="match status" value="1"/>
</dbReference>
<dbReference type="InterPro" id="IPR050536">
    <property type="entry name" value="DtxR_MntR_Metal-Reg"/>
</dbReference>
<dbReference type="InterPro" id="IPR001367">
    <property type="entry name" value="Fe_dep_repressor"/>
</dbReference>
<dbReference type="InterPro" id="IPR036421">
    <property type="entry name" value="Fe_dep_repressor_sf"/>
</dbReference>
<dbReference type="InterPro" id="IPR022687">
    <property type="entry name" value="HTH_DTXR"/>
</dbReference>
<dbReference type="InterPro" id="IPR022897">
    <property type="entry name" value="HTH_tscrpt_reg_MntR"/>
</dbReference>
<dbReference type="InterPro" id="IPR022689">
    <property type="entry name" value="Iron_dep_repressor"/>
</dbReference>
<dbReference type="InterPro" id="IPR036388">
    <property type="entry name" value="WH-like_DNA-bd_sf"/>
</dbReference>
<dbReference type="InterPro" id="IPR036390">
    <property type="entry name" value="WH_DNA-bd_sf"/>
</dbReference>
<dbReference type="NCBIfam" id="NF003025">
    <property type="entry name" value="PRK03902.1"/>
    <property type="match status" value="1"/>
</dbReference>
<dbReference type="PANTHER" id="PTHR33238">
    <property type="entry name" value="IRON (METAL) DEPENDENT REPRESSOR, DTXR FAMILY"/>
    <property type="match status" value="1"/>
</dbReference>
<dbReference type="PANTHER" id="PTHR33238:SF11">
    <property type="entry name" value="TRANSCRIPTIONAL REGULATOR MNTR"/>
    <property type="match status" value="1"/>
</dbReference>
<dbReference type="Pfam" id="PF02742">
    <property type="entry name" value="Fe_dep_repr_C"/>
    <property type="match status" value="1"/>
</dbReference>
<dbReference type="Pfam" id="PF01325">
    <property type="entry name" value="Fe_dep_repress"/>
    <property type="match status" value="1"/>
</dbReference>
<dbReference type="SMART" id="SM00529">
    <property type="entry name" value="HTH_DTXR"/>
    <property type="match status" value="1"/>
</dbReference>
<dbReference type="SUPFAM" id="SSF47979">
    <property type="entry name" value="Iron-dependent repressor protein, dimerization domain"/>
    <property type="match status" value="1"/>
</dbReference>
<dbReference type="SUPFAM" id="SSF46785">
    <property type="entry name" value="Winged helix' DNA-binding domain"/>
    <property type="match status" value="1"/>
</dbReference>
<dbReference type="PROSITE" id="PS50944">
    <property type="entry name" value="HTH_DTXR"/>
    <property type="match status" value="1"/>
</dbReference>